<gene>
    <name evidence="1" type="primary">fucU</name>
    <name type="ordered locus">SeD_A3303</name>
</gene>
<keyword id="KW-0119">Carbohydrate metabolism</keyword>
<keyword id="KW-0963">Cytoplasm</keyword>
<keyword id="KW-0294">Fucose metabolism</keyword>
<keyword id="KW-0413">Isomerase</keyword>
<organism>
    <name type="scientific">Salmonella dublin (strain CT_02021853)</name>
    <dbReference type="NCBI Taxonomy" id="439851"/>
    <lineage>
        <taxon>Bacteria</taxon>
        <taxon>Pseudomonadati</taxon>
        <taxon>Pseudomonadota</taxon>
        <taxon>Gammaproteobacteria</taxon>
        <taxon>Enterobacterales</taxon>
        <taxon>Enterobacteriaceae</taxon>
        <taxon>Salmonella</taxon>
    </lineage>
</organism>
<proteinExistence type="inferred from homology"/>
<reference key="1">
    <citation type="journal article" date="2011" name="J. Bacteriol.">
        <title>Comparative genomics of 28 Salmonella enterica isolates: evidence for CRISPR-mediated adaptive sublineage evolution.</title>
        <authorList>
            <person name="Fricke W.F."/>
            <person name="Mammel M.K."/>
            <person name="McDermott P.F."/>
            <person name="Tartera C."/>
            <person name="White D.G."/>
            <person name="Leclerc J.E."/>
            <person name="Ravel J."/>
            <person name="Cebula T.A."/>
        </authorList>
    </citation>
    <scope>NUCLEOTIDE SEQUENCE [LARGE SCALE GENOMIC DNA]</scope>
    <source>
        <strain>CT_02021853</strain>
    </source>
</reference>
<protein>
    <recommendedName>
        <fullName evidence="1">L-fucose mutarotase</fullName>
        <ecNumber evidence="1">5.1.3.29</ecNumber>
    </recommendedName>
    <alternativeName>
        <fullName evidence="1">Fucose 1-epimerase</fullName>
    </alternativeName>
    <alternativeName>
        <fullName evidence="1">Type-2 mutarotase</fullName>
    </alternativeName>
</protein>
<comment type="function">
    <text evidence="1">Involved in the anomeric conversion of L-fucose.</text>
</comment>
<comment type="catalytic activity">
    <reaction evidence="1">
        <text>alpha-L-fucose = beta-L-fucose</text>
        <dbReference type="Rhea" id="RHEA:25580"/>
        <dbReference type="ChEBI" id="CHEBI:42548"/>
        <dbReference type="ChEBI" id="CHEBI:42589"/>
        <dbReference type="EC" id="5.1.3.29"/>
    </reaction>
</comment>
<comment type="pathway">
    <text evidence="1">Carbohydrate metabolism; L-fucose metabolism.</text>
</comment>
<comment type="subunit">
    <text evidence="1">Homodecamer.</text>
</comment>
<comment type="subcellular location">
    <subcellularLocation>
        <location evidence="1">Cytoplasm</location>
    </subcellularLocation>
</comment>
<comment type="similarity">
    <text evidence="1">Belongs to the RbsD / FucU family. FucU mutarotase subfamily.</text>
</comment>
<feature type="chain" id="PRO_1000187192" description="L-fucose mutarotase">
    <location>
        <begin position="1"/>
        <end position="140"/>
    </location>
</feature>
<feature type="active site" description="Proton donor" evidence="1">
    <location>
        <position position="22"/>
    </location>
</feature>
<feature type="binding site" evidence="1">
    <location>
        <position position="30"/>
    </location>
    <ligand>
        <name>substrate</name>
    </ligand>
</feature>
<feature type="binding site" evidence="1">
    <location>
        <position position="107"/>
    </location>
    <ligand>
        <name>substrate</name>
    </ligand>
</feature>
<feature type="binding site" evidence="1">
    <location>
        <begin position="129"/>
        <end position="131"/>
    </location>
    <ligand>
        <name>substrate</name>
    </ligand>
</feature>
<sequence length="140" mass="15254">MLKTISPLISPTLLKVLAEMGHGDEIIFSDAHFPAHSLGPQVIRADGLSVSDLLRAIIPLFELDSYAPPLVMMAAVEGDTLDPSVEARYRDALSLEAPCPDIVRIDRYAFYERAQKAFAIVITGECAKYGNILLKKGVTP</sequence>
<accession>B5FTY3</accession>
<dbReference type="EC" id="5.1.3.29" evidence="1"/>
<dbReference type="EMBL" id="CP001144">
    <property type="protein sequence ID" value="ACH74424.1"/>
    <property type="molecule type" value="Genomic_DNA"/>
</dbReference>
<dbReference type="RefSeq" id="WP_000920848.1">
    <property type="nucleotide sequence ID" value="NC_011205.1"/>
</dbReference>
<dbReference type="SMR" id="B5FTY3"/>
<dbReference type="KEGG" id="sed:SeD_A3303"/>
<dbReference type="HOGENOM" id="CLU_120075_1_0_6"/>
<dbReference type="UniPathway" id="UPA00956"/>
<dbReference type="Proteomes" id="UP000008322">
    <property type="component" value="Chromosome"/>
</dbReference>
<dbReference type="GO" id="GO:0005737">
    <property type="term" value="C:cytoplasm"/>
    <property type="evidence" value="ECO:0007669"/>
    <property type="project" value="UniProtKB-SubCell"/>
</dbReference>
<dbReference type="GO" id="GO:0042806">
    <property type="term" value="F:fucose binding"/>
    <property type="evidence" value="ECO:0007669"/>
    <property type="project" value="InterPro"/>
</dbReference>
<dbReference type="GO" id="GO:0036373">
    <property type="term" value="F:L-fucose mutarotase activity"/>
    <property type="evidence" value="ECO:0007669"/>
    <property type="project" value="UniProtKB-EC"/>
</dbReference>
<dbReference type="GO" id="GO:0036065">
    <property type="term" value="P:fucosylation"/>
    <property type="evidence" value="ECO:0007669"/>
    <property type="project" value="TreeGrafter"/>
</dbReference>
<dbReference type="GO" id="GO:0042354">
    <property type="term" value="P:L-fucose metabolic process"/>
    <property type="evidence" value="ECO:0007669"/>
    <property type="project" value="UniProtKB-UniRule"/>
</dbReference>
<dbReference type="FunFam" id="3.40.1650.10:FF:000001">
    <property type="entry name" value="L-fucose mutarotase"/>
    <property type="match status" value="1"/>
</dbReference>
<dbReference type="Gene3D" id="3.40.1650.10">
    <property type="entry name" value="RbsD-like domain"/>
    <property type="match status" value="1"/>
</dbReference>
<dbReference type="HAMAP" id="MF_01662">
    <property type="entry name" value="L_fucose_rotase"/>
    <property type="match status" value="1"/>
</dbReference>
<dbReference type="InterPro" id="IPR023751">
    <property type="entry name" value="L-fucose_mutarotase"/>
</dbReference>
<dbReference type="InterPro" id="IPR023750">
    <property type="entry name" value="RbsD-like_sf"/>
</dbReference>
<dbReference type="InterPro" id="IPR050443">
    <property type="entry name" value="RbsD/FucU_mutarotase"/>
</dbReference>
<dbReference type="InterPro" id="IPR007721">
    <property type="entry name" value="RbsD_FucU"/>
</dbReference>
<dbReference type="NCBIfam" id="NF011949">
    <property type="entry name" value="PRK15420.1"/>
    <property type="match status" value="1"/>
</dbReference>
<dbReference type="PANTHER" id="PTHR31690">
    <property type="entry name" value="FUCOSE MUTAROTASE"/>
    <property type="match status" value="1"/>
</dbReference>
<dbReference type="PANTHER" id="PTHR31690:SF4">
    <property type="entry name" value="FUCOSE MUTAROTASE"/>
    <property type="match status" value="1"/>
</dbReference>
<dbReference type="Pfam" id="PF05025">
    <property type="entry name" value="RbsD_FucU"/>
    <property type="match status" value="1"/>
</dbReference>
<dbReference type="SUPFAM" id="SSF102546">
    <property type="entry name" value="RbsD-like"/>
    <property type="match status" value="1"/>
</dbReference>
<name>FUCM_SALDC</name>
<evidence type="ECO:0000255" key="1">
    <source>
        <dbReference type="HAMAP-Rule" id="MF_01662"/>
    </source>
</evidence>